<gene>
    <name evidence="1" type="primary">rpsH</name>
    <name type="ordered locus">CTN_1007</name>
</gene>
<keyword id="KW-0687">Ribonucleoprotein</keyword>
<keyword id="KW-0689">Ribosomal protein</keyword>
<keyword id="KW-0694">RNA-binding</keyword>
<keyword id="KW-0699">rRNA-binding</keyword>
<name>RS8_THENN</name>
<accession>B9K8A0</accession>
<evidence type="ECO:0000255" key="1">
    <source>
        <dbReference type="HAMAP-Rule" id="MF_01302"/>
    </source>
</evidence>
<evidence type="ECO:0000305" key="2"/>
<comment type="function">
    <text evidence="1">One of the primary rRNA binding proteins, it binds directly to 16S rRNA central domain where it helps coordinate assembly of the platform of the 30S subunit.</text>
</comment>
<comment type="subunit">
    <text evidence="1">Part of the 30S ribosomal subunit. Contacts proteins S5 and S12.</text>
</comment>
<comment type="similarity">
    <text evidence="1">Belongs to the universal ribosomal protein uS8 family.</text>
</comment>
<dbReference type="EMBL" id="CP000916">
    <property type="protein sequence ID" value="ACM23183.1"/>
    <property type="molecule type" value="Genomic_DNA"/>
</dbReference>
<dbReference type="RefSeq" id="WP_015919499.1">
    <property type="nucleotide sequence ID" value="NC_011978.1"/>
</dbReference>
<dbReference type="SMR" id="B9K8A0"/>
<dbReference type="STRING" id="309803.CTN_1007"/>
<dbReference type="KEGG" id="tna:CTN_1007"/>
<dbReference type="eggNOG" id="COG0096">
    <property type="taxonomic scope" value="Bacteria"/>
</dbReference>
<dbReference type="HOGENOM" id="CLU_098428_0_2_0"/>
<dbReference type="Proteomes" id="UP000000445">
    <property type="component" value="Chromosome"/>
</dbReference>
<dbReference type="GO" id="GO:1990904">
    <property type="term" value="C:ribonucleoprotein complex"/>
    <property type="evidence" value="ECO:0007669"/>
    <property type="project" value="UniProtKB-KW"/>
</dbReference>
<dbReference type="GO" id="GO:0005840">
    <property type="term" value="C:ribosome"/>
    <property type="evidence" value="ECO:0007669"/>
    <property type="project" value="UniProtKB-KW"/>
</dbReference>
<dbReference type="GO" id="GO:0019843">
    <property type="term" value="F:rRNA binding"/>
    <property type="evidence" value="ECO:0007669"/>
    <property type="project" value="UniProtKB-UniRule"/>
</dbReference>
<dbReference type="GO" id="GO:0003735">
    <property type="term" value="F:structural constituent of ribosome"/>
    <property type="evidence" value="ECO:0007669"/>
    <property type="project" value="InterPro"/>
</dbReference>
<dbReference type="GO" id="GO:0006412">
    <property type="term" value="P:translation"/>
    <property type="evidence" value="ECO:0007669"/>
    <property type="project" value="UniProtKB-UniRule"/>
</dbReference>
<dbReference type="FunFam" id="3.30.1370.30:FF:000002">
    <property type="entry name" value="30S ribosomal protein S8"/>
    <property type="match status" value="1"/>
</dbReference>
<dbReference type="FunFam" id="3.30.1490.10:FF:000001">
    <property type="entry name" value="30S ribosomal protein S8"/>
    <property type="match status" value="1"/>
</dbReference>
<dbReference type="Gene3D" id="3.30.1370.30">
    <property type="match status" value="1"/>
</dbReference>
<dbReference type="Gene3D" id="3.30.1490.10">
    <property type="match status" value="1"/>
</dbReference>
<dbReference type="HAMAP" id="MF_01302_B">
    <property type="entry name" value="Ribosomal_uS8_B"/>
    <property type="match status" value="1"/>
</dbReference>
<dbReference type="InterPro" id="IPR000630">
    <property type="entry name" value="Ribosomal_uS8"/>
</dbReference>
<dbReference type="InterPro" id="IPR047863">
    <property type="entry name" value="Ribosomal_uS8_CS"/>
</dbReference>
<dbReference type="InterPro" id="IPR035987">
    <property type="entry name" value="Ribosomal_uS8_sf"/>
</dbReference>
<dbReference type="NCBIfam" id="NF001109">
    <property type="entry name" value="PRK00136.1"/>
    <property type="match status" value="1"/>
</dbReference>
<dbReference type="PANTHER" id="PTHR11758">
    <property type="entry name" value="40S RIBOSOMAL PROTEIN S15A"/>
    <property type="match status" value="1"/>
</dbReference>
<dbReference type="Pfam" id="PF00410">
    <property type="entry name" value="Ribosomal_S8"/>
    <property type="match status" value="1"/>
</dbReference>
<dbReference type="SUPFAM" id="SSF56047">
    <property type="entry name" value="Ribosomal protein S8"/>
    <property type="match status" value="1"/>
</dbReference>
<dbReference type="PROSITE" id="PS00053">
    <property type="entry name" value="RIBOSOMAL_S8"/>
    <property type="match status" value="1"/>
</dbReference>
<organism>
    <name type="scientific">Thermotoga neapolitana (strain ATCC 49049 / DSM 4359 / NBRC 107923 / NS-E)</name>
    <dbReference type="NCBI Taxonomy" id="309803"/>
    <lineage>
        <taxon>Bacteria</taxon>
        <taxon>Thermotogati</taxon>
        <taxon>Thermotogota</taxon>
        <taxon>Thermotogae</taxon>
        <taxon>Thermotogales</taxon>
        <taxon>Thermotogaceae</taxon>
        <taxon>Thermotoga</taxon>
    </lineage>
</organism>
<feature type="chain" id="PRO_1000165358" description="Small ribosomal subunit protein uS8">
    <location>
        <begin position="1"/>
        <end position="134"/>
    </location>
</feature>
<sequence length="134" mass="15303">MWSDPIADMLTRIRNANMVFKEYTDIPASNLKRKICEILKREGFIADYKYIEDGKQGILRVYLKYKGGRKNRERVIHGIVRVSHAGRRVYVDKDHIPKVKNGLGIAILTTSKGVLTDKEARQLGVGGEVIAYVW</sequence>
<proteinExistence type="inferred from homology"/>
<reference key="1">
    <citation type="submission" date="2007-11" db="EMBL/GenBank/DDBJ databases">
        <title>The genome sequence of the hyperthermophilic bacterium Thermotoga neapolitana.</title>
        <authorList>
            <person name="Lim S.K."/>
            <person name="Kim J.S."/>
            <person name="Cha S.H."/>
            <person name="Park B.C."/>
            <person name="Lee D.S."/>
            <person name="Tae H.S."/>
            <person name="Kim S.-J."/>
            <person name="Kim J.J."/>
            <person name="Park K.J."/>
            <person name="Lee S.Y."/>
        </authorList>
    </citation>
    <scope>NUCLEOTIDE SEQUENCE [LARGE SCALE GENOMIC DNA]</scope>
    <source>
        <strain>ATCC 49049 / DSM 4359 / NBRC 107923 / NS-E</strain>
    </source>
</reference>
<protein>
    <recommendedName>
        <fullName evidence="1">Small ribosomal subunit protein uS8</fullName>
    </recommendedName>
    <alternativeName>
        <fullName evidence="2">30S ribosomal protein S8</fullName>
    </alternativeName>
</protein>